<protein>
    <recommendedName>
        <fullName evidence="1">GTPase Der</fullName>
    </recommendedName>
    <alternativeName>
        <fullName evidence="1">GTP-binding protein EngA</fullName>
    </alternativeName>
</protein>
<gene>
    <name evidence="1" type="primary">der</name>
    <name type="synonym">engA</name>
    <name type="ordered locus">PST_3027</name>
</gene>
<reference key="1">
    <citation type="journal article" date="2008" name="Proc. Natl. Acad. Sci. U.S.A.">
        <title>Nitrogen fixation island and rhizosphere competence traits in the genome of root-associated Pseudomonas stutzeri A1501.</title>
        <authorList>
            <person name="Yan Y."/>
            <person name="Yang J."/>
            <person name="Dou Y."/>
            <person name="Chen M."/>
            <person name="Ping S."/>
            <person name="Peng J."/>
            <person name="Lu W."/>
            <person name="Zhang W."/>
            <person name="Yao Z."/>
            <person name="Li H."/>
            <person name="Liu W."/>
            <person name="He S."/>
            <person name="Geng L."/>
            <person name="Zhang X."/>
            <person name="Yang F."/>
            <person name="Yu H."/>
            <person name="Zhan Y."/>
            <person name="Li D."/>
            <person name="Lin Z."/>
            <person name="Wang Y."/>
            <person name="Elmerich C."/>
            <person name="Lin M."/>
            <person name="Jin Q."/>
        </authorList>
    </citation>
    <scope>NUCLEOTIDE SEQUENCE [LARGE SCALE GENOMIC DNA]</scope>
    <source>
        <strain>A1501</strain>
    </source>
</reference>
<feature type="chain" id="PRO_1000011707" description="GTPase Der">
    <location>
        <begin position="1"/>
        <end position="499"/>
    </location>
</feature>
<feature type="domain" description="EngA-type G 1">
    <location>
        <begin position="3"/>
        <end position="166"/>
    </location>
</feature>
<feature type="domain" description="EngA-type G 2">
    <location>
        <begin position="204"/>
        <end position="377"/>
    </location>
</feature>
<feature type="domain" description="KH-like" evidence="1">
    <location>
        <begin position="378"/>
        <end position="462"/>
    </location>
</feature>
<feature type="region of interest" description="Disordered" evidence="2">
    <location>
        <begin position="166"/>
        <end position="199"/>
    </location>
</feature>
<feature type="region of interest" description="Disordered" evidence="2">
    <location>
        <begin position="459"/>
        <end position="499"/>
    </location>
</feature>
<feature type="compositionally biased region" description="Acidic residues" evidence="2">
    <location>
        <begin position="168"/>
        <end position="186"/>
    </location>
</feature>
<feature type="compositionally biased region" description="Basic and acidic residues" evidence="2">
    <location>
        <begin position="190"/>
        <end position="199"/>
    </location>
</feature>
<feature type="compositionally biased region" description="Basic and acidic residues" evidence="2">
    <location>
        <begin position="459"/>
        <end position="472"/>
    </location>
</feature>
<feature type="compositionally biased region" description="Basic residues" evidence="2">
    <location>
        <begin position="478"/>
        <end position="499"/>
    </location>
</feature>
<feature type="binding site" evidence="1">
    <location>
        <begin position="9"/>
        <end position="16"/>
    </location>
    <ligand>
        <name>GTP</name>
        <dbReference type="ChEBI" id="CHEBI:37565"/>
        <label>1</label>
    </ligand>
</feature>
<feature type="binding site" evidence="1">
    <location>
        <begin position="56"/>
        <end position="60"/>
    </location>
    <ligand>
        <name>GTP</name>
        <dbReference type="ChEBI" id="CHEBI:37565"/>
        <label>1</label>
    </ligand>
</feature>
<feature type="binding site" evidence="1">
    <location>
        <begin position="118"/>
        <end position="121"/>
    </location>
    <ligand>
        <name>GTP</name>
        <dbReference type="ChEBI" id="CHEBI:37565"/>
        <label>1</label>
    </ligand>
</feature>
<feature type="binding site" evidence="1">
    <location>
        <begin position="210"/>
        <end position="217"/>
    </location>
    <ligand>
        <name>GTP</name>
        <dbReference type="ChEBI" id="CHEBI:37565"/>
        <label>2</label>
    </ligand>
</feature>
<feature type="binding site" evidence="1">
    <location>
        <begin position="257"/>
        <end position="261"/>
    </location>
    <ligand>
        <name>GTP</name>
        <dbReference type="ChEBI" id="CHEBI:37565"/>
        <label>2</label>
    </ligand>
</feature>
<feature type="binding site" evidence="1">
    <location>
        <begin position="322"/>
        <end position="325"/>
    </location>
    <ligand>
        <name>GTP</name>
        <dbReference type="ChEBI" id="CHEBI:37565"/>
        <label>2</label>
    </ligand>
</feature>
<name>DER_STUS1</name>
<evidence type="ECO:0000255" key="1">
    <source>
        <dbReference type="HAMAP-Rule" id="MF_00195"/>
    </source>
</evidence>
<evidence type="ECO:0000256" key="2">
    <source>
        <dbReference type="SAM" id="MobiDB-lite"/>
    </source>
</evidence>
<dbReference type="EMBL" id="CP000304">
    <property type="protein sequence ID" value="ABP80668.1"/>
    <property type="molecule type" value="Genomic_DNA"/>
</dbReference>
<dbReference type="RefSeq" id="WP_011914122.1">
    <property type="nucleotide sequence ID" value="NC_009434.1"/>
</dbReference>
<dbReference type="SMR" id="A4VNW7"/>
<dbReference type="KEGG" id="psa:PST_3027"/>
<dbReference type="eggNOG" id="COG1160">
    <property type="taxonomic scope" value="Bacteria"/>
</dbReference>
<dbReference type="HOGENOM" id="CLU_016077_6_2_6"/>
<dbReference type="Proteomes" id="UP000000233">
    <property type="component" value="Chromosome"/>
</dbReference>
<dbReference type="GO" id="GO:0005525">
    <property type="term" value="F:GTP binding"/>
    <property type="evidence" value="ECO:0007669"/>
    <property type="project" value="UniProtKB-UniRule"/>
</dbReference>
<dbReference type="GO" id="GO:0043022">
    <property type="term" value="F:ribosome binding"/>
    <property type="evidence" value="ECO:0007669"/>
    <property type="project" value="TreeGrafter"/>
</dbReference>
<dbReference type="GO" id="GO:0042254">
    <property type="term" value="P:ribosome biogenesis"/>
    <property type="evidence" value="ECO:0007669"/>
    <property type="project" value="UniProtKB-KW"/>
</dbReference>
<dbReference type="CDD" id="cd01894">
    <property type="entry name" value="EngA1"/>
    <property type="match status" value="1"/>
</dbReference>
<dbReference type="CDD" id="cd01895">
    <property type="entry name" value="EngA2"/>
    <property type="match status" value="1"/>
</dbReference>
<dbReference type="FunFam" id="3.30.300.20:FF:000004">
    <property type="entry name" value="GTPase Der"/>
    <property type="match status" value="1"/>
</dbReference>
<dbReference type="FunFam" id="3.40.50.300:FF:000040">
    <property type="entry name" value="GTPase Der"/>
    <property type="match status" value="1"/>
</dbReference>
<dbReference type="FunFam" id="3.40.50.300:FF:000057">
    <property type="entry name" value="GTPase Der"/>
    <property type="match status" value="1"/>
</dbReference>
<dbReference type="Gene3D" id="3.30.300.20">
    <property type="match status" value="1"/>
</dbReference>
<dbReference type="Gene3D" id="3.40.50.300">
    <property type="entry name" value="P-loop containing nucleotide triphosphate hydrolases"/>
    <property type="match status" value="2"/>
</dbReference>
<dbReference type="HAMAP" id="MF_00195">
    <property type="entry name" value="GTPase_Der"/>
    <property type="match status" value="1"/>
</dbReference>
<dbReference type="InterPro" id="IPR031166">
    <property type="entry name" value="G_ENGA"/>
</dbReference>
<dbReference type="InterPro" id="IPR006073">
    <property type="entry name" value="GTP-bd"/>
</dbReference>
<dbReference type="InterPro" id="IPR016484">
    <property type="entry name" value="GTPase_Der"/>
</dbReference>
<dbReference type="InterPro" id="IPR032859">
    <property type="entry name" value="KH_dom-like"/>
</dbReference>
<dbReference type="InterPro" id="IPR015946">
    <property type="entry name" value="KH_dom-like_a/b"/>
</dbReference>
<dbReference type="InterPro" id="IPR027417">
    <property type="entry name" value="P-loop_NTPase"/>
</dbReference>
<dbReference type="InterPro" id="IPR005225">
    <property type="entry name" value="Small_GTP-bd"/>
</dbReference>
<dbReference type="NCBIfam" id="TIGR03594">
    <property type="entry name" value="GTPase_EngA"/>
    <property type="match status" value="1"/>
</dbReference>
<dbReference type="NCBIfam" id="TIGR00231">
    <property type="entry name" value="small_GTP"/>
    <property type="match status" value="2"/>
</dbReference>
<dbReference type="PANTHER" id="PTHR43834">
    <property type="entry name" value="GTPASE DER"/>
    <property type="match status" value="1"/>
</dbReference>
<dbReference type="PANTHER" id="PTHR43834:SF6">
    <property type="entry name" value="GTPASE DER"/>
    <property type="match status" value="1"/>
</dbReference>
<dbReference type="Pfam" id="PF14714">
    <property type="entry name" value="KH_dom-like"/>
    <property type="match status" value="1"/>
</dbReference>
<dbReference type="Pfam" id="PF01926">
    <property type="entry name" value="MMR_HSR1"/>
    <property type="match status" value="2"/>
</dbReference>
<dbReference type="PIRSF" id="PIRSF006485">
    <property type="entry name" value="GTP-binding_EngA"/>
    <property type="match status" value="1"/>
</dbReference>
<dbReference type="PRINTS" id="PR00326">
    <property type="entry name" value="GTP1OBG"/>
</dbReference>
<dbReference type="SUPFAM" id="SSF52540">
    <property type="entry name" value="P-loop containing nucleoside triphosphate hydrolases"/>
    <property type="match status" value="2"/>
</dbReference>
<dbReference type="PROSITE" id="PS51712">
    <property type="entry name" value="G_ENGA"/>
    <property type="match status" value="2"/>
</dbReference>
<keyword id="KW-0342">GTP-binding</keyword>
<keyword id="KW-0547">Nucleotide-binding</keyword>
<keyword id="KW-1185">Reference proteome</keyword>
<keyword id="KW-0677">Repeat</keyword>
<keyword id="KW-0690">Ribosome biogenesis</keyword>
<sequence length="499" mass="55719">MVPVIALVGRPNVGKSTLFNRLTKSRDAIVAEYAGLTRDRQYGEAKWQGRTYIVIDTGGISGDEEGIDAKMAEQSLQAIEEADAVLFMVDSRAGLTAADQMIGEHLRKRNKRCFLVANKVDSVDPDIARAEFSPLGLGDALPIAAAHGRGISHMLEQALGIFPKDNADENAEGEEGGELAEGEEVVAEGQEPKRIPGPSEKEGIKIAIIGRPNVGKSTLVNRMLGEERVIVYDQAGTTRDSIYIPFERDEEKYTLIDTAGVRRRGKIFEAVEKFSVVKTLQAIQDANVVIFVMDAREGVVEHDLNLLGFVLETGRALVIALNKWDGMEQGEKDYVKTELERRLFFVDYADIHFISAKHGTGVGHLYKSVQAAFKSAITRWPTSRLTQILEDAVREHQPPMVNSRRIKLRYAHLGGANPPLIVIHGNQVDAVPKSYTRYLENTYRRVLKLVGTPIRIEYKGGDNPYEGKKNTLTDRQVNKKRRLMSHHKKAEKKRRDKKR</sequence>
<proteinExistence type="inferred from homology"/>
<accession>A4VNW7</accession>
<comment type="function">
    <text evidence="1">GTPase that plays an essential role in the late steps of ribosome biogenesis.</text>
</comment>
<comment type="subunit">
    <text evidence="1">Associates with the 50S ribosomal subunit.</text>
</comment>
<comment type="similarity">
    <text evidence="1">Belongs to the TRAFAC class TrmE-Era-EngA-EngB-Septin-like GTPase superfamily. EngA (Der) GTPase family.</text>
</comment>
<organism>
    <name type="scientific">Stutzerimonas stutzeri (strain A1501)</name>
    <name type="common">Pseudomonas stutzeri</name>
    <dbReference type="NCBI Taxonomy" id="379731"/>
    <lineage>
        <taxon>Bacteria</taxon>
        <taxon>Pseudomonadati</taxon>
        <taxon>Pseudomonadota</taxon>
        <taxon>Gammaproteobacteria</taxon>
        <taxon>Pseudomonadales</taxon>
        <taxon>Pseudomonadaceae</taxon>
        <taxon>Stutzerimonas</taxon>
    </lineage>
</organism>